<keyword id="KW-0963">Cytoplasm</keyword>
<keyword id="KW-0269">Exonuclease</keyword>
<keyword id="KW-0378">Hydrolase</keyword>
<keyword id="KW-0540">Nuclease</keyword>
<evidence type="ECO:0000255" key="1">
    <source>
        <dbReference type="HAMAP-Rule" id="MF_00378"/>
    </source>
</evidence>
<reference key="1">
    <citation type="journal article" date="2002" name="Lancet">
        <title>Genome and virulence determinants of high virulence community-acquired MRSA.</title>
        <authorList>
            <person name="Baba T."/>
            <person name="Takeuchi F."/>
            <person name="Kuroda M."/>
            <person name="Yuzawa H."/>
            <person name="Aoki K."/>
            <person name="Oguchi A."/>
            <person name="Nagai Y."/>
            <person name="Iwama N."/>
            <person name="Asano K."/>
            <person name="Naimi T."/>
            <person name="Kuroda H."/>
            <person name="Cui L."/>
            <person name="Yamamoto K."/>
            <person name="Hiramatsu K."/>
        </authorList>
    </citation>
    <scope>NUCLEOTIDE SEQUENCE [LARGE SCALE GENOMIC DNA]</scope>
    <source>
        <strain>MW2</strain>
    </source>
</reference>
<dbReference type="EC" id="3.1.11.6" evidence="1"/>
<dbReference type="EMBL" id="BA000033">
    <property type="protein sequence ID" value="BAB95341.1"/>
    <property type="molecule type" value="Genomic_DNA"/>
</dbReference>
<dbReference type="RefSeq" id="WP_001286928.1">
    <property type="nucleotide sequence ID" value="NC_003923.1"/>
</dbReference>
<dbReference type="SMR" id="P67451"/>
<dbReference type="KEGG" id="sam:MW1476"/>
<dbReference type="HOGENOM" id="CLU_023625_3_1_9"/>
<dbReference type="GO" id="GO:0005737">
    <property type="term" value="C:cytoplasm"/>
    <property type="evidence" value="ECO:0007669"/>
    <property type="project" value="UniProtKB-SubCell"/>
</dbReference>
<dbReference type="GO" id="GO:0009318">
    <property type="term" value="C:exodeoxyribonuclease VII complex"/>
    <property type="evidence" value="ECO:0007669"/>
    <property type="project" value="InterPro"/>
</dbReference>
<dbReference type="GO" id="GO:0008855">
    <property type="term" value="F:exodeoxyribonuclease VII activity"/>
    <property type="evidence" value="ECO:0007669"/>
    <property type="project" value="UniProtKB-UniRule"/>
</dbReference>
<dbReference type="GO" id="GO:0003676">
    <property type="term" value="F:nucleic acid binding"/>
    <property type="evidence" value="ECO:0007669"/>
    <property type="project" value="InterPro"/>
</dbReference>
<dbReference type="GO" id="GO:0006308">
    <property type="term" value="P:DNA catabolic process"/>
    <property type="evidence" value="ECO:0007669"/>
    <property type="project" value="UniProtKB-UniRule"/>
</dbReference>
<dbReference type="CDD" id="cd04489">
    <property type="entry name" value="ExoVII_LU_OBF"/>
    <property type="match status" value="1"/>
</dbReference>
<dbReference type="HAMAP" id="MF_00378">
    <property type="entry name" value="Exonuc_7_L"/>
    <property type="match status" value="1"/>
</dbReference>
<dbReference type="InterPro" id="IPR003753">
    <property type="entry name" value="Exonuc_VII_L"/>
</dbReference>
<dbReference type="InterPro" id="IPR020579">
    <property type="entry name" value="Exonuc_VII_lsu_C"/>
</dbReference>
<dbReference type="InterPro" id="IPR025824">
    <property type="entry name" value="OB-fold_nuc-bd_dom"/>
</dbReference>
<dbReference type="NCBIfam" id="TIGR00237">
    <property type="entry name" value="xseA"/>
    <property type="match status" value="1"/>
</dbReference>
<dbReference type="PANTHER" id="PTHR30008">
    <property type="entry name" value="EXODEOXYRIBONUCLEASE 7 LARGE SUBUNIT"/>
    <property type="match status" value="1"/>
</dbReference>
<dbReference type="PANTHER" id="PTHR30008:SF0">
    <property type="entry name" value="EXODEOXYRIBONUCLEASE 7 LARGE SUBUNIT"/>
    <property type="match status" value="1"/>
</dbReference>
<dbReference type="Pfam" id="PF02601">
    <property type="entry name" value="Exonuc_VII_L"/>
    <property type="match status" value="1"/>
</dbReference>
<dbReference type="Pfam" id="PF13742">
    <property type="entry name" value="tRNA_anti_2"/>
    <property type="match status" value="1"/>
</dbReference>
<sequence>MSDYLSVSALTKYIKYKFDQDPHLQSVLIKGELSNFKKHSSGHLYFNVKDKESVISAMMFKGSASKLNFEPKEGDEVLLEARVSVFERRGNYQIYVNKMQLDGIGNLYQKLEALKKKLTEEGCFDKANKKSIPKFPKKIAVLTASTGAAIRDIHSTINSRFPLAEQIQISTLVQGEKAKDDIIEKIEYADSLGVDTIIVGRGGGSIEDLWNFNEEAVVRAIYNCKTPIISAVGHETDFTLSDFAADIRAATPTQAAVIATPDQYELLQQIQQYQFTLTRFIKKHLEQQRKHVEHLSSYYKFKQPTLLYDQQIQRRDDLEKRLKQQIQATFEQQRHRLMLLQQRYNLKALLSSVNQEQQNNLQLTNQLVKLLNSKILSYKNDLKNKVENLNNLSPTNTMLRGYAIVNKKDEVITSTKDLTENDQLTLTMKDGLVDAKVTKVRCNND</sequence>
<organism>
    <name type="scientific">Staphylococcus aureus (strain MW2)</name>
    <dbReference type="NCBI Taxonomy" id="196620"/>
    <lineage>
        <taxon>Bacteria</taxon>
        <taxon>Bacillati</taxon>
        <taxon>Bacillota</taxon>
        <taxon>Bacilli</taxon>
        <taxon>Bacillales</taxon>
        <taxon>Staphylococcaceae</taxon>
        <taxon>Staphylococcus</taxon>
    </lineage>
</organism>
<name>EX7L_STAAW</name>
<comment type="function">
    <text evidence="1">Bidirectionally degrades single-stranded DNA into large acid-insoluble oligonucleotides, which are then degraded further into small acid-soluble oligonucleotides.</text>
</comment>
<comment type="catalytic activity">
    <reaction evidence="1">
        <text>Exonucleolytic cleavage in either 5'- to 3'- or 3'- to 5'-direction to yield nucleoside 5'-phosphates.</text>
        <dbReference type="EC" id="3.1.11.6"/>
    </reaction>
</comment>
<comment type="subunit">
    <text evidence="1">Heterooligomer composed of large and small subunits.</text>
</comment>
<comment type="subcellular location">
    <subcellularLocation>
        <location evidence="1">Cytoplasm</location>
    </subcellularLocation>
</comment>
<comment type="similarity">
    <text evidence="1">Belongs to the XseA family.</text>
</comment>
<gene>
    <name evidence="1" type="primary">xseA</name>
    <name type="ordered locus">MW1476</name>
</gene>
<accession>P67451</accession>
<accession>Q99TX0</accession>
<proteinExistence type="inferred from homology"/>
<feature type="chain" id="PRO_0000197882" description="Exodeoxyribonuclease 7 large subunit">
    <location>
        <begin position="1"/>
        <end position="445"/>
    </location>
</feature>
<protein>
    <recommendedName>
        <fullName evidence="1">Exodeoxyribonuclease 7 large subunit</fullName>
        <ecNumber evidence="1">3.1.11.6</ecNumber>
    </recommendedName>
    <alternativeName>
        <fullName evidence="1">Exodeoxyribonuclease VII large subunit</fullName>
        <shortName evidence="1">Exonuclease VII large subunit</shortName>
    </alternativeName>
</protein>